<feature type="signal peptide" evidence="2">
    <location>
        <begin position="1"/>
        <end position="21"/>
    </location>
</feature>
<feature type="chain" id="PRO_0000412169" description="Sodium/potassium-transporting ATPase subunit beta-1-interacting protein 1">
    <location>
        <begin position="22"/>
        <end position="207"/>
    </location>
</feature>
<feature type="topological domain" description="Extracellular" evidence="2">
    <location>
        <begin position="22"/>
        <end position="34"/>
    </location>
</feature>
<feature type="transmembrane region" description="Helical" evidence="2">
    <location>
        <begin position="35"/>
        <end position="55"/>
    </location>
</feature>
<feature type="topological domain" description="Cytoplasmic" evidence="2">
    <location>
        <begin position="56"/>
        <end position="61"/>
    </location>
</feature>
<feature type="transmembrane region" description="Helical" evidence="2">
    <location>
        <begin position="62"/>
        <end position="82"/>
    </location>
</feature>
<feature type="topological domain" description="Extracellular" evidence="2">
    <location>
        <begin position="83"/>
        <end position="146"/>
    </location>
</feature>
<feature type="transmembrane region" description="Helical" evidence="2">
    <location>
        <begin position="147"/>
        <end position="167"/>
    </location>
</feature>
<feature type="topological domain" description="Cytoplasmic" evidence="2">
    <location>
        <begin position="168"/>
        <end position="207"/>
    </location>
</feature>
<feature type="glycosylation site" description="N-linked (GlcNAc...) asparagine" evidence="2">
    <location>
        <position position="100"/>
    </location>
</feature>
<feature type="splice variant" id="VSP_056113" description="In isoform 2." evidence="3">
    <location>
        <begin position="1"/>
        <end position="44"/>
    </location>
</feature>
<feature type="splice variant" id="VSP_056114" description="In isoform 2." evidence="3">
    <location>
        <begin position="65"/>
        <end position="91"/>
    </location>
</feature>
<feature type="sequence conflict" description="In Ref. 1; BAH13055." evidence="4" ref="1">
    <original>Q</original>
    <variation>R</variation>
    <location>
        <position position="88"/>
    </location>
</feature>
<reference key="1">
    <citation type="journal article" date="2004" name="Nat. Genet.">
        <title>Complete sequencing and characterization of 21,243 full-length human cDNAs.</title>
        <authorList>
            <person name="Ota T."/>
            <person name="Suzuki Y."/>
            <person name="Nishikawa T."/>
            <person name="Otsuki T."/>
            <person name="Sugiyama T."/>
            <person name="Irie R."/>
            <person name="Wakamatsu A."/>
            <person name="Hayashi K."/>
            <person name="Sato H."/>
            <person name="Nagai K."/>
            <person name="Kimura K."/>
            <person name="Makita H."/>
            <person name="Sekine M."/>
            <person name="Obayashi M."/>
            <person name="Nishi T."/>
            <person name="Shibahara T."/>
            <person name="Tanaka T."/>
            <person name="Ishii S."/>
            <person name="Yamamoto J."/>
            <person name="Saito K."/>
            <person name="Kawai Y."/>
            <person name="Isono Y."/>
            <person name="Nakamura Y."/>
            <person name="Nagahari K."/>
            <person name="Murakami K."/>
            <person name="Yasuda T."/>
            <person name="Iwayanagi T."/>
            <person name="Wagatsuma M."/>
            <person name="Shiratori A."/>
            <person name="Sudo H."/>
            <person name="Hosoiri T."/>
            <person name="Kaku Y."/>
            <person name="Kodaira H."/>
            <person name="Kondo H."/>
            <person name="Sugawara M."/>
            <person name="Takahashi M."/>
            <person name="Kanda K."/>
            <person name="Yokoi T."/>
            <person name="Furuya T."/>
            <person name="Kikkawa E."/>
            <person name="Omura Y."/>
            <person name="Abe K."/>
            <person name="Kamihara K."/>
            <person name="Katsuta N."/>
            <person name="Sato K."/>
            <person name="Tanikawa M."/>
            <person name="Yamazaki M."/>
            <person name="Ninomiya K."/>
            <person name="Ishibashi T."/>
            <person name="Yamashita H."/>
            <person name="Murakawa K."/>
            <person name="Fujimori K."/>
            <person name="Tanai H."/>
            <person name="Kimata M."/>
            <person name="Watanabe M."/>
            <person name="Hiraoka S."/>
            <person name="Chiba Y."/>
            <person name="Ishida S."/>
            <person name="Ono Y."/>
            <person name="Takiguchi S."/>
            <person name="Watanabe S."/>
            <person name="Yosida M."/>
            <person name="Hotuta T."/>
            <person name="Kusano J."/>
            <person name="Kanehori K."/>
            <person name="Takahashi-Fujii A."/>
            <person name="Hara H."/>
            <person name="Tanase T.-O."/>
            <person name="Nomura Y."/>
            <person name="Togiya S."/>
            <person name="Komai F."/>
            <person name="Hara R."/>
            <person name="Takeuchi K."/>
            <person name="Arita M."/>
            <person name="Imose N."/>
            <person name="Musashino K."/>
            <person name="Yuuki H."/>
            <person name="Oshima A."/>
            <person name="Sasaki N."/>
            <person name="Aotsuka S."/>
            <person name="Yoshikawa Y."/>
            <person name="Matsunawa H."/>
            <person name="Ichihara T."/>
            <person name="Shiohata N."/>
            <person name="Sano S."/>
            <person name="Moriya S."/>
            <person name="Momiyama H."/>
            <person name="Satoh N."/>
            <person name="Takami S."/>
            <person name="Terashima Y."/>
            <person name="Suzuki O."/>
            <person name="Nakagawa S."/>
            <person name="Senoh A."/>
            <person name="Mizoguchi H."/>
            <person name="Goto Y."/>
            <person name="Shimizu F."/>
            <person name="Wakebe H."/>
            <person name="Hishigaki H."/>
            <person name="Watanabe T."/>
            <person name="Sugiyama A."/>
            <person name="Takemoto M."/>
            <person name="Kawakami B."/>
            <person name="Yamazaki M."/>
            <person name="Watanabe K."/>
            <person name="Kumagai A."/>
            <person name="Itakura S."/>
            <person name="Fukuzumi Y."/>
            <person name="Fujimori Y."/>
            <person name="Komiyama M."/>
            <person name="Tashiro H."/>
            <person name="Tanigami A."/>
            <person name="Fujiwara T."/>
            <person name="Ono T."/>
            <person name="Yamada K."/>
            <person name="Fujii Y."/>
            <person name="Ozaki K."/>
            <person name="Hirao M."/>
            <person name="Ohmori Y."/>
            <person name="Kawabata A."/>
            <person name="Hikiji T."/>
            <person name="Kobatake N."/>
            <person name="Inagaki H."/>
            <person name="Ikema Y."/>
            <person name="Okamoto S."/>
            <person name="Okitani R."/>
            <person name="Kawakami T."/>
            <person name="Noguchi S."/>
            <person name="Itoh T."/>
            <person name="Shigeta K."/>
            <person name="Senba T."/>
            <person name="Matsumura K."/>
            <person name="Nakajima Y."/>
            <person name="Mizuno T."/>
            <person name="Morinaga M."/>
            <person name="Sasaki M."/>
            <person name="Togashi T."/>
            <person name="Oyama M."/>
            <person name="Hata H."/>
            <person name="Watanabe M."/>
            <person name="Komatsu T."/>
            <person name="Mizushima-Sugano J."/>
            <person name="Satoh T."/>
            <person name="Shirai Y."/>
            <person name="Takahashi Y."/>
            <person name="Nakagawa K."/>
            <person name="Okumura K."/>
            <person name="Nagase T."/>
            <person name="Nomura N."/>
            <person name="Kikuchi H."/>
            <person name="Masuho Y."/>
            <person name="Yamashita R."/>
            <person name="Nakai K."/>
            <person name="Yada T."/>
            <person name="Nakamura Y."/>
            <person name="Ohara O."/>
            <person name="Isogai T."/>
            <person name="Sugano S."/>
        </authorList>
    </citation>
    <scope>NUCLEOTIDE SEQUENCE [LARGE SCALE MRNA] (ISOFORMS 1 AND 2)</scope>
    <source>
        <tissue>Brain</tissue>
    </source>
</reference>
<reference key="2">
    <citation type="journal article" date="2006" name="Nature">
        <title>The DNA sequence and biological annotation of human chromosome 1.</title>
        <authorList>
            <person name="Gregory S.G."/>
            <person name="Barlow K.F."/>
            <person name="McLay K.E."/>
            <person name="Kaul R."/>
            <person name="Swarbreck D."/>
            <person name="Dunham A."/>
            <person name="Scott C.E."/>
            <person name="Howe K.L."/>
            <person name="Woodfine K."/>
            <person name="Spencer C.C.A."/>
            <person name="Jones M.C."/>
            <person name="Gillson C."/>
            <person name="Searle S."/>
            <person name="Zhou Y."/>
            <person name="Kokocinski F."/>
            <person name="McDonald L."/>
            <person name="Evans R."/>
            <person name="Phillips K."/>
            <person name="Atkinson A."/>
            <person name="Cooper R."/>
            <person name="Jones C."/>
            <person name="Hall R.E."/>
            <person name="Andrews T.D."/>
            <person name="Lloyd C."/>
            <person name="Ainscough R."/>
            <person name="Almeida J.P."/>
            <person name="Ambrose K.D."/>
            <person name="Anderson F."/>
            <person name="Andrew R.W."/>
            <person name="Ashwell R.I.S."/>
            <person name="Aubin K."/>
            <person name="Babbage A.K."/>
            <person name="Bagguley C.L."/>
            <person name="Bailey J."/>
            <person name="Beasley H."/>
            <person name="Bethel G."/>
            <person name="Bird C.P."/>
            <person name="Bray-Allen S."/>
            <person name="Brown J.Y."/>
            <person name="Brown A.J."/>
            <person name="Buckley D."/>
            <person name="Burton J."/>
            <person name="Bye J."/>
            <person name="Carder C."/>
            <person name="Chapman J.C."/>
            <person name="Clark S.Y."/>
            <person name="Clarke G."/>
            <person name="Clee C."/>
            <person name="Cobley V."/>
            <person name="Collier R.E."/>
            <person name="Corby N."/>
            <person name="Coville G.J."/>
            <person name="Davies J."/>
            <person name="Deadman R."/>
            <person name="Dunn M."/>
            <person name="Earthrowl M."/>
            <person name="Ellington A.G."/>
            <person name="Errington H."/>
            <person name="Frankish A."/>
            <person name="Frankland J."/>
            <person name="French L."/>
            <person name="Garner P."/>
            <person name="Garnett J."/>
            <person name="Gay L."/>
            <person name="Ghori M.R.J."/>
            <person name="Gibson R."/>
            <person name="Gilby L.M."/>
            <person name="Gillett W."/>
            <person name="Glithero R.J."/>
            <person name="Grafham D.V."/>
            <person name="Griffiths C."/>
            <person name="Griffiths-Jones S."/>
            <person name="Grocock R."/>
            <person name="Hammond S."/>
            <person name="Harrison E.S.I."/>
            <person name="Hart E."/>
            <person name="Haugen E."/>
            <person name="Heath P.D."/>
            <person name="Holmes S."/>
            <person name="Holt K."/>
            <person name="Howden P.J."/>
            <person name="Hunt A.R."/>
            <person name="Hunt S.E."/>
            <person name="Hunter G."/>
            <person name="Isherwood J."/>
            <person name="James R."/>
            <person name="Johnson C."/>
            <person name="Johnson D."/>
            <person name="Joy A."/>
            <person name="Kay M."/>
            <person name="Kershaw J.K."/>
            <person name="Kibukawa M."/>
            <person name="Kimberley A.M."/>
            <person name="King A."/>
            <person name="Knights A.J."/>
            <person name="Lad H."/>
            <person name="Laird G."/>
            <person name="Lawlor S."/>
            <person name="Leongamornlert D.A."/>
            <person name="Lloyd D.M."/>
            <person name="Loveland J."/>
            <person name="Lovell J."/>
            <person name="Lush M.J."/>
            <person name="Lyne R."/>
            <person name="Martin S."/>
            <person name="Mashreghi-Mohammadi M."/>
            <person name="Matthews L."/>
            <person name="Matthews N.S.W."/>
            <person name="McLaren S."/>
            <person name="Milne S."/>
            <person name="Mistry S."/>
            <person name="Moore M.J.F."/>
            <person name="Nickerson T."/>
            <person name="O'Dell C.N."/>
            <person name="Oliver K."/>
            <person name="Palmeiri A."/>
            <person name="Palmer S.A."/>
            <person name="Parker A."/>
            <person name="Patel D."/>
            <person name="Pearce A.V."/>
            <person name="Peck A.I."/>
            <person name="Pelan S."/>
            <person name="Phelps K."/>
            <person name="Phillimore B.J."/>
            <person name="Plumb R."/>
            <person name="Rajan J."/>
            <person name="Raymond C."/>
            <person name="Rouse G."/>
            <person name="Saenphimmachak C."/>
            <person name="Sehra H.K."/>
            <person name="Sheridan E."/>
            <person name="Shownkeen R."/>
            <person name="Sims S."/>
            <person name="Skuce C.D."/>
            <person name="Smith M."/>
            <person name="Steward C."/>
            <person name="Subramanian S."/>
            <person name="Sycamore N."/>
            <person name="Tracey A."/>
            <person name="Tromans A."/>
            <person name="Van Helmond Z."/>
            <person name="Wall M."/>
            <person name="Wallis J.M."/>
            <person name="White S."/>
            <person name="Whitehead S.L."/>
            <person name="Wilkinson J.E."/>
            <person name="Willey D.L."/>
            <person name="Williams H."/>
            <person name="Wilming L."/>
            <person name="Wray P.W."/>
            <person name="Wu Z."/>
            <person name="Coulson A."/>
            <person name="Vaudin M."/>
            <person name="Sulston J.E."/>
            <person name="Durbin R.M."/>
            <person name="Hubbard T."/>
            <person name="Wooster R."/>
            <person name="Dunham I."/>
            <person name="Carter N.P."/>
            <person name="McVean G."/>
            <person name="Ross M.T."/>
            <person name="Harrow J."/>
            <person name="Olson M.V."/>
            <person name="Beck S."/>
            <person name="Rogers J."/>
            <person name="Bentley D.R."/>
        </authorList>
    </citation>
    <scope>NUCLEOTIDE SEQUENCE [LARGE SCALE GENOMIC DNA]</scope>
</reference>
<reference key="3">
    <citation type="submission" date="2005-09" db="EMBL/GenBank/DDBJ databases">
        <authorList>
            <person name="Mural R.J."/>
            <person name="Istrail S."/>
            <person name="Sutton G.G."/>
            <person name="Florea L."/>
            <person name="Halpern A.L."/>
            <person name="Mobarry C.M."/>
            <person name="Lippert R."/>
            <person name="Walenz B."/>
            <person name="Shatkay H."/>
            <person name="Dew I."/>
            <person name="Miller J.R."/>
            <person name="Flanigan M.J."/>
            <person name="Edwards N.J."/>
            <person name="Bolanos R."/>
            <person name="Fasulo D."/>
            <person name="Halldorsson B.V."/>
            <person name="Hannenhalli S."/>
            <person name="Turner R."/>
            <person name="Yooseph S."/>
            <person name="Lu F."/>
            <person name="Nusskern D.R."/>
            <person name="Shue B.C."/>
            <person name="Zheng X.H."/>
            <person name="Zhong F."/>
            <person name="Delcher A.L."/>
            <person name="Huson D.H."/>
            <person name="Kravitz S.A."/>
            <person name="Mouchard L."/>
            <person name="Reinert K."/>
            <person name="Remington K.A."/>
            <person name="Clark A.G."/>
            <person name="Waterman M.S."/>
            <person name="Eichler E.E."/>
            <person name="Adams M.D."/>
            <person name="Hunkapiller M.W."/>
            <person name="Myers E.W."/>
            <person name="Venter J.C."/>
        </authorList>
    </citation>
    <scope>NUCLEOTIDE SEQUENCE [LARGE SCALE GENOMIC DNA]</scope>
</reference>
<reference key="4">
    <citation type="journal article" date="2004" name="Genome Res.">
        <title>The status, quality, and expansion of the NIH full-length cDNA project: the Mammalian Gene Collection (MGC).</title>
        <authorList>
            <consortium name="The MGC Project Team"/>
        </authorList>
    </citation>
    <scope>NUCLEOTIDE SEQUENCE [LARGE SCALE MRNA] OF 35-207 (ISOFORM 1)</scope>
</reference>
<comment type="subunit">
    <text evidence="1">Interacts with ATP1B1 C-terminus.</text>
</comment>
<comment type="subcellular location">
    <subcellularLocation>
        <location evidence="4">Cell membrane</location>
        <topology evidence="4">Multi-pass membrane protein</topology>
    </subcellularLocation>
</comment>
<comment type="alternative products">
    <event type="alternative splicing"/>
    <isoform>
        <id>Q4KMZ8-1</id>
        <name>1</name>
        <sequence type="displayed"/>
    </isoform>
    <isoform>
        <id>Q4KMZ8-3</id>
        <name>2</name>
        <sequence type="described" ref="VSP_056113 VSP_056114"/>
    </isoform>
</comment>
<comment type="similarity">
    <text evidence="4">Belongs to the NKAIN family.</text>
</comment>
<comment type="sequence caution" evidence="4">
    <conflict type="erroneous initiation">
        <sequence resource="EMBL-CDS" id="AAH96707"/>
    </conflict>
    <text>Truncated N-terminus.</text>
</comment>
<comment type="sequence caution" evidence="4">
    <conflict type="erroneous initiation">
        <sequence resource="EMBL-CDS" id="AAH98173"/>
    </conflict>
    <text>Truncated N-terminus.</text>
</comment>
<comment type="sequence caution" evidence="4">
    <conflict type="erroneous initiation">
        <sequence resource="EMBL-CDS" id="AAH98249"/>
    </conflict>
    <text>Truncated N-terminus.</text>
</comment>
<comment type="sequence caution" evidence="4">
    <conflict type="erroneous initiation">
        <sequence resource="EMBL-CDS" id="AAI31519"/>
    </conflict>
    <text>Truncated N-terminus.</text>
</comment>
<comment type="sequence caution" evidence="4">
    <conflict type="erroneous initiation">
        <sequence resource="EMBL-CDS" id="BAB14196"/>
    </conflict>
    <text>Truncated N-terminus.</text>
</comment>
<comment type="sequence caution" evidence="4">
    <conflict type="erroneous gene model prediction">
        <sequence resource="EMBL-CDS" id="EAX07629"/>
    </conflict>
</comment>
<sequence length="207" mass="23552">MGKCSGRCTLVAFCCLQLVAALERQIFDFLGYQWAPILANFLHIMAVILGIFGTVQYRSRYLILYAAWLVLWVGWNAFIICFYLEVGQLSQDRDFIMTFNTSLHRSWWMENGPGCLVTPVLNSRLALEDHHVISVTGCLLDYPYIEALSSALQIFLALFGFVFACYVSKVFLEEEDSFDFIGGFDSYGYQAPQKTSHLQLQPLYTSG</sequence>
<dbReference type="EMBL" id="AK022712">
    <property type="protein sequence ID" value="BAB14196.1"/>
    <property type="status" value="ALT_INIT"/>
    <property type="molecule type" value="mRNA"/>
</dbReference>
<dbReference type="EMBL" id="AK298874">
    <property type="protein sequence ID" value="BAH12891.1"/>
    <property type="molecule type" value="mRNA"/>
</dbReference>
<dbReference type="EMBL" id="AK299507">
    <property type="protein sequence ID" value="BAH13055.1"/>
    <property type="molecule type" value="mRNA"/>
</dbReference>
<dbReference type="EMBL" id="AC114495">
    <property type="status" value="NOT_ANNOTATED_CDS"/>
    <property type="molecule type" value="Genomic_DNA"/>
</dbReference>
<dbReference type="EMBL" id="CH471059">
    <property type="protein sequence ID" value="EAX07629.1"/>
    <property type="status" value="ALT_SEQ"/>
    <property type="molecule type" value="Genomic_DNA"/>
</dbReference>
<dbReference type="EMBL" id="BC096707">
    <property type="protein sequence ID" value="AAH96707.2"/>
    <property type="status" value="ALT_INIT"/>
    <property type="molecule type" value="mRNA"/>
</dbReference>
<dbReference type="EMBL" id="BC098173">
    <property type="protein sequence ID" value="AAH98173.2"/>
    <property type="status" value="ALT_INIT"/>
    <property type="molecule type" value="mRNA"/>
</dbReference>
<dbReference type="EMBL" id="BC098249">
    <property type="protein sequence ID" value="AAH98249.2"/>
    <property type="status" value="ALT_INIT"/>
    <property type="molecule type" value="mRNA"/>
</dbReference>
<dbReference type="EMBL" id="BC131518">
    <property type="protein sequence ID" value="AAI31519.1"/>
    <property type="status" value="ALT_INIT"/>
    <property type="molecule type" value="mRNA"/>
</dbReference>
<dbReference type="CCDS" id="CCDS339.2">
    <molecule id="Q4KMZ8-1"/>
</dbReference>
<dbReference type="RefSeq" id="NP_078798.2">
    <molecule id="Q4KMZ8-1"/>
    <property type="nucleotide sequence ID" value="NM_024522.3"/>
</dbReference>
<dbReference type="BioGRID" id="122717">
    <property type="interactions" value="122"/>
</dbReference>
<dbReference type="FunCoup" id="Q4KMZ8">
    <property type="interactions" value="79"/>
</dbReference>
<dbReference type="IntAct" id="Q4KMZ8">
    <property type="interactions" value="64"/>
</dbReference>
<dbReference type="STRING" id="9606.ENSP00000362841"/>
<dbReference type="TCDB" id="8.A.118.1.2">
    <property type="family name" value="the na+k+-atpase beta-subunit interacting nkain (nkain) family"/>
</dbReference>
<dbReference type="GlyCosmos" id="Q4KMZ8">
    <property type="glycosylation" value="1 site, No reported glycans"/>
</dbReference>
<dbReference type="GlyGen" id="Q4KMZ8">
    <property type="glycosylation" value="1 site"/>
</dbReference>
<dbReference type="iPTMnet" id="Q4KMZ8"/>
<dbReference type="PhosphoSitePlus" id="Q4KMZ8"/>
<dbReference type="BioMuta" id="NKAIN1"/>
<dbReference type="DMDM" id="341942232"/>
<dbReference type="MassIVE" id="Q4KMZ8"/>
<dbReference type="PaxDb" id="9606-ENSP00000362841"/>
<dbReference type="PeptideAtlas" id="Q4KMZ8"/>
<dbReference type="ProteomicsDB" id="62209">
    <molecule id="Q4KMZ8-1"/>
</dbReference>
<dbReference type="ProteomicsDB" id="6688"/>
<dbReference type="Antibodypedia" id="16738">
    <property type="antibodies" value="75 antibodies from 16 providers"/>
</dbReference>
<dbReference type="DNASU" id="79570"/>
<dbReference type="Ensembl" id="ENST00000373736.7">
    <molecule id="Q4KMZ8-1"/>
    <property type="protein sequence ID" value="ENSP00000362841.2"/>
    <property type="gene ID" value="ENSG00000084628.10"/>
</dbReference>
<dbReference type="GeneID" id="79570"/>
<dbReference type="KEGG" id="hsa:79570"/>
<dbReference type="MANE-Select" id="ENST00000373736.7">
    <property type="protein sequence ID" value="ENSP00000362841.2"/>
    <property type="RefSeq nucleotide sequence ID" value="NM_024522.3"/>
    <property type="RefSeq protein sequence ID" value="NP_078798.2"/>
</dbReference>
<dbReference type="UCSC" id="uc010ogd.3">
    <molecule id="Q4KMZ8-1"/>
    <property type="organism name" value="human"/>
</dbReference>
<dbReference type="AGR" id="HGNC:25743"/>
<dbReference type="CTD" id="79570"/>
<dbReference type="DisGeNET" id="79570"/>
<dbReference type="GeneCards" id="NKAIN1"/>
<dbReference type="HGNC" id="HGNC:25743">
    <property type="gene designation" value="NKAIN1"/>
</dbReference>
<dbReference type="HPA" id="ENSG00000084628">
    <property type="expression patterns" value="Group enriched (adrenal gland, brain, skeletal muscle, tongue)"/>
</dbReference>
<dbReference type="MIM" id="612871">
    <property type="type" value="gene"/>
</dbReference>
<dbReference type="neXtProt" id="NX_Q4KMZ8"/>
<dbReference type="OpenTargets" id="ENSG00000084628"/>
<dbReference type="VEuPathDB" id="HostDB:ENSG00000084628"/>
<dbReference type="eggNOG" id="KOG4556">
    <property type="taxonomic scope" value="Eukaryota"/>
</dbReference>
<dbReference type="GeneTree" id="ENSGT00940000159949"/>
<dbReference type="InParanoid" id="Q4KMZ8"/>
<dbReference type="OMA" id="DSHMAPD"/>
<dbReference type="OrthoDB" id="10050321at2759"/>
<dbReference type="PAN-GO" id="Q4KMZ8">
    <property type="GO annotations" value="1 GO annotation based on evolutionary models"/>
</dbReference>
<dbReference type="PhylomeDB" id="Q4KMZ8"/>
<dbReference type="TreeFam" id="TF321348"/>
<dbReference type="PathwayCommons" id="Q4KMZ8"/>
<dbReference type="BioGRID-ORCS" id="79570">
    <property type="hits" value="17 hits in 1145 CRISPR screens"/>
</dbReference>
<dbReference type="ChiTaRS" id="NKAIN1">
    <property type="organism name" value="human"/>
</dbReference>
<dbReference type="GenomeRNAi" id="79570"/>
<dbReference type="Pharos" id="Q4KMZ8">
    <property type="development level" value="Tdark"/>
</dbReference>
<dbReference type="PRO" id="PR:Q4KMZ8"/>
<dbReference type="Proteomes" id="UP000005640">
    <property type="component" value="Chromosome 1"/>
</dbReference>
<dbReference type="RNAct" id="Q4KMZ8">
    <property type="molecule type" value="protein"/>
</dbReference>
<dbReference type="Bgee" id="ENSG00000084628">
    <property type="expression patterns" value="Expressed in cortical plate and 107 other cell types or tissues"/>
</dbReference>
<dbReference type="ExpressionAtlas" id="Q4KMZ8">
    <property type="expression patterns" value="baseline and differential"/>
</dbReference>
<dbReference type="GO" id="GO:0005886">
    <property type="term" value="C:plasma membrane"/>
    <property type="evidence" value="ECO:0007669"/>
    <property type="project" value="UniProtKB-SubCell"/>
</dbReference>
<dbReference type="GO" id="GO:0051117">
    <property type="term" value="F:ATPase binding"/>
    <property type="evidence" value="ECO:0007669"/>
    <property type="project" value="Ensembl"/>
</dbReference>
<dbReference type="GO" id="GO:0002028">
    <property type="term" value="P:regulation of sodium ion transport"/>
    <property type="evidence" value="ECO:0000318"/>
    <property type="project" value="GO_Central"/>
</dbReference>
<dbReference type="InterPro" id="IPR008516">
    <property type="entry name" value="Na/K-Atpase_Interacting"/>
</dbReference>
<dbReference type="PANTHER" id="PTHR13084:SF4">
    <property type="entry name" value="SODIUM_POTASSIUM-TRANSPORTING ATPASE SUBUNIT BETA-1-INTERACTING PROTEIN 1"/>
    <property type="match status" value="1"/>
</dbReference>
<dbReference type="PANTHER" id="PTHR13084">
    <property type="entry name" value="T-CELL LYMPHOMA BREAKPOINT-ASSOCIATED TARGET 1-RELATED"/>
    <property type="match status" value="1"/>
</dbReference>
<dbReference type="Pfam" id="PF05640">
    <property type="entry name" value="NKAIN"/>
    <property type="match status" value="1"/>
</dbReference>
<gene>
    <name type="primary">NKAIN1</name>
    <name type="synonym">FAM77C</name>
</gene>
<evidence type="ECO:0000250" key="1"/>
<evidence type="ECO:0000255" key="2"/>
<evidence type="ECO:0000303" key="3">
    <source>
    </source>
</evidence>
<evidence type="ECO:0000305" key="4"/>
<keyword id="KW-0025">Alternative splicing</keyword>
<keyword id="KW-1003">Cell membrane</keyword>
<keyword id="KW-0325">Glycoprotein</keyword>
<keyword id="KW-0472">Membrane</keyword>
<keyword id="KW-1185">Reference proteome</keyword>
<keyword id="KW-0732">Signal</keyword>
<keyword id="KW-0812">Transmembrane</keyword>
<keyword id="KW-1133">Transmembrane helix</keyword>
<accession>Q4KMZ8</accession>
<accession>A2VDJ3</accession>
<accession>B7Z5F5</accession>
<accession>B7Z5W9</accession>
<accession>Q9H9M7</accession>
<organism>
    <name type="scientific">Homo sapiens</name>
    <name type="common">Human</name>
    <dbReference type="NCBI Taxonomy" id="9606"/>
    <lineage>
        <taxon>Eukaryota</taxon>
        <taxon>Metazoa</taxon>
        <taxon>Chordata</taxon>
        <taxon>Craniata</taxon>
        <taxon>Vertebrata</taxon>
        <taxon>Euteleostomi</taxon>
        <taxon>Mammalia</taxon>
        <taxon>Eutheria</taxon>
        <taxon>Euarchontoglires</taxon>
        <taxon>Primates</taxon>
        <taxon>Haplorrhini</taxon>
        <taxon>Catarrhini</taxon>
        <taxon>Hominidae</taxon>
        <taxon>Homo</taxon>
    </lineage>
</organism>
<name>NKAI1_HUMAN</name>
<protein>
    <recommendedName>
        <fullName>Sodium/potassium-transporting ATPase subunit beta-1-interacting protein 1</fullName>
        <shortName>Na(+)/K(+)-transporting ATPase subunit beta-1-interacting protein 1</shortName>
    </recommendedName>
    <alternativeName>
        <fullName>Protein FAM77C</fullName>
    </alternativeName>
</protein>
<proteinExistence type="evidence at transcript level"/>